<accession>A5UY26</accession>
<organism>
    <name type="scientific">Roseiflexus sp. (strain RS-1)</name>
    <dbReference type="NCBI Taxonomy" id="357808"/>
    <lineage>
        <taxon>Bacteria</taxon>
        <taxon>Bacillati</taxon>
        <taxon>Chloroflexota</taxon>
        <taxon>Chloroflexia</taxon>
        <taxon>Chloroflexales</taxon>
        <taxon>Roseiflexineae</taxon>
        <taxon>Roseiflexaceae</taxon>
        <taxon>Roseiflexus</taxon>
    </lineage>
</organism>
<protein>
    <recommendedName>
        <fullName evidence="1">tRNA uridine 5-carboxymethylaminomethyl modification enzyme MnmG</fullName>
    </recommendedName>
    <alternativeName>
        <fullName evidence="1">Glucose-inhibited division protein A</fullName>
    </alternativeName>
</protein>
<dbReference type="EMBL" id="CP000686">
    <property type="protein sequence ID" value="ABQ91529.1"/>
    <property type="molecule type" value="Genomic_DNA"/>
</dbReference>
<dbReference type="RefSeq" id="WP_011957873.1">
    <property type="nucleotide sequence ID" value="NC_009523.1"/>
</dbReference>
<dbReference type="SMR" id="A5UY26"/>
<dbReference type="STRING" id="357808.RoseRS_3168"/>
<dbReference type="KEGG" id="rrs:RoseRS_3168"/>
<dbReference type="eggNOG" id="COG0445">
    <property type="taxonomic scope" value="Bacteria"/>
</dbReference>
<dbReference type="HOGENOM" id="CLU_007831_2_2_0"/>
<dbReference type="OrthoDB" id="9815560at2"/>
<dbReference type="Proteomes" id="UP000006554">
    <property type="component" value="Chromosome"/>
</dbReference>
<dbReference type="GO" id="GO:0005829">
    <property type="term" value="C:cytosol"/>
    <property type="evidence" value="ECO:0007669"/>
    <property type="project" value="TreeGrafter"/>
</dbReference>
<dbReference type="GO" id="GO:0050660">
    <property type="term" value="F:flavin adenine dinucleotide binding"/>
    <property type="evidence" value="ECO:0007669"/>
    <property type="project" value="UniProtKB-UniRule"/>
</dbReference>
<dbReference type="GO" id="GO:0030488">
    <property type="term" value="P:tRNA methylation"/>
    <property type="evidence" value="ECO:0007669"/>
    <property type="project" value="TreeGrafter"/>
</dbReference>
<dbReference type="GO" id="GO:0002098">
    <property type="term" value="P:tRNA wobble uridine modification"/>
    <property type="evidence" value="ECO:0007669"/>
    <property type="project" value="InterPro"/>
</dbReference>
<dbReference type="FunFam" id="1.10.150.570:FF:000001">
    <property type="entry name" value="tRNA uridine 5-carboxymethylaminomethyl modification enzyme MnmG"/>
    <property type="match status" value="1"/>
</dbReference>
<dbReference type="FunFam" id="3.50.50.60:FF:000002">
    <property type="entry name" value="tRNA uridine 5-carboxymethylaminomethyl modification enzyme MnmG"/>
    <property type="match status" value="1"/>
</dbReference>
<dbReference type="Gene3D" id="3.50.50.60">
    <property type="entry name" value="FAD/NAD(P)-binding domain"/>
    <property type="match status" value="2"/>
</dbReference>
<dbReference type="Gene3D" id="1.10.150.570">
    <property type="entry name" value="GidA associated domain, C-terminal subdomain"/>
    <property type="match status" value="1"/>
</dbReference>
<dbReference type="Gene3D" id="1.10.10.1800">
    <property type="entry name" value="tRNA uridine 5-carboxymethylaminomethyl modification enzyme MnmG/GidA"/>
    <property type="match status" value="1"/>
</dbReference>
<dbReference type="HAMAP" id="MF_00129">
    <property type="entry name" value="MnmG_GidA"/>
    <property type="match status" value="1"/>
</dbReference>
<dbReference type="InterPro" id="IPR036188">
    <property type="entry name" value="FAD/NAD-bd_sf"/>
</dbReference>
<dbReference type="InterPro" id="IPR049312">
    <property type="entry name" value="GIDA_C_N"/>
</dbReference>
<dbReference type="InterPro" id="IPR004416">
    <property type="entry name" value="MnmG"/>
</dbReference>
<dbReference type="InterPro" id="IPR002218">
    <property type="entry name" value="MnmG-rel"/>
</dbReference>
<dbReference type="InterPro" id="IPR020595">
    <property type="entry name" value="MnmG-rel_CS"/>
</dbReference>
<dbReference type="InterPro" id="IPR026904">
    <property type="entry name" value="MnmG_C"/>
</dbReference>
<dbReference type="InterPro" id="IPR047001">
    <property type="entry name" value="MnmG_C_subdom"/>
</dbReference>
<dbReference type="InterPro" id="IPR044920">
    <property type="entry name" value="MnmG_C_subdom_sf"/>
</dbReference>
<dbReference type="InterPro" id="IPR040131">
    <property type="entry name" value="MnmG_N"/>
</dbReference>
<dbReference type="PANTHER" id="PTHR11806">
    <property type="entry name" value="GLUCOSE INHIBITED DIVISION PROTEIN A"/>
    <property type="match status" value="1"/>
</dbReference>
<dbReference type="PANTHER" id="PTHR11806:SF0">
    <property type="entry name" value="PROTEIN MTO1 HOMOLOG, MITOCHONDRIAL"/>
    <property type="match status" value="1"/>
</dbReference>
<dbReference type="Pfam" id="PF01134">
    <property type="entry name" value="GIDA"/>
    <property type="match status" value="1"/>
</dbReference>
<dbReference type="Pfam" id="PF21680">
    <property type="entry name" value="GIDA_C_1st"/>
    <property type="match status" value="1"/>
</dbReference>
<dbReference type="Pfam" id="PF13932">
    <property type="entry name" value="SAM_GIDA_C"/>
    <property type="match status" value="1"/>
</dbReference>
<dbReference type="SMART" id="SM01228">
    <property type="entry name" value="GIDA_assoc_3"/>
    <property type="match status" value="1"/>
</dbReference>
<dbReference type="SUPFAM" id="SSF51905">
    <property type="entry name" value="FAD/NAD(P)-binding domain"/>
    <property type="match status" value="1"/>
</dbReference>
<dbReference type="PROSITE" id="PS01280">
    <property type="entry name" value="GIDA_1"/>
    <property type="match status" value="1"/>
</dbReference>
<dbReference type="PROSITE" id="PS01281">
    <property type="entry name" value="GIDA_2"/>
    <property type="match status" value="1"/>
</dbReference>
<reference key="1">
    <citation type="submission" date="2007-04" db="EMBL/GenBank/DDBJ databases">
        <title>Complete sequence of Roseiflexus sp. RS-1.</title>
        <authorList>
            <consortium name="US DOE Joint Genome Institute"/>
            <person name="Copeland A."/>
            <person name="Lucas S."/>
            <person name="Lapidus A."/>
            <person name="Barry K."/>
            <person name="Detter J.C."/>
            <person name="Glavina del Rio T."/>
            <person name="Hammon N."/>
            <person name="Israni S."/>
            <person name="Dalin E."/>
            <person name="Tice H."/>
            <person name="Pitluck S."/>
            <person name="Chertkov O."/>
            <person name="Brettin T."/>
            <person name="Bruce D."/>
            <person name="Han C."/>
            <person name="Schmutz J."/>
            <person name="Larimer F."/>
            <person name="Land M."/>
            <person name="Hauser L."/>
            <person name="Kyrpides N."/>
            <person name="Mikhailova N."/>
            <person name="Bryant D.A."/>
            <person name="Richardson P."/>
        </authorList>
    </citation>
    <scope>NUCLEOTIDE SEQUENCE [LARGE SCALE GENOMIC DNA]</scope>
    <source>
        <strain>RS-1</strain>
    </source>
</reference>
<keyword id="KW-0963">Cytoplasm</keyword>
<keyword id="KW-0274">FAD</keyword>
<keyword id="KW-0285">Flavoprotein</keyword>
<keyword id="KW-0520">NAD</keyword>
<keyword id="KW-0819">tRNA processing</keyword>
<sequence length="679" mass="74906">MHSTHPYIYDVIVVGAGHAGCEAAHAAARMGCRTLLLTIDLDKLAHMSCNPSIGGPAKGHLVREIDALGGLMGRVTDRTFIQIRLLNESKGPAVQAPRAQADKRLYAKVMKETLETIPNLDLRQAMIERIILPRPINRNGSDTDDAEALCPGHYAVVTHTRRIYQCRALVLTTGTFLRGRAITGDAIWGAGRAGEAPATALGEDLAALGFPLVRLKTGTPPRIDARTIDFSLTSVQHGSATPLFFGFYYRALNEAPPEPAFGGPPASAYPEPLLDAWRPQLPCYLVHTTPEFHEIVRRNLDRAPLFSGIIEGVGPRYCPSIEDKIVRFADKERHGLFLEPEGWSTHEVYVQGCNTSLPEDVQWAMLRSIPALRRVELMRAGYAIEYDALATGEIAADMSSRRAPGLFFAGQINGTTGYEEAAAQGLMAGINAARFVQGKPSVLLRRDEAYIGVLIDDLVTKEIREPYRMFTSRAEHRLLLRADNADLRLTPLAGELGLVDRERVAVVERKREEVERLLAVLRGKRLYPSAAINARLSAAGIAPLTGEMSAEEVLRRPEVRYRQLQPALDLPACEADVAEQVDIEAKYSGYLLKQQREVERLRRMESRRIPPDFDFAALRGLRNEARQTLQRFRPATIGQAARLAGINPADIALLLVALERQTRQATPVETPHPSLPHTG</sequence>
<evidence type="ECO:0000255" key="1">
    <source>
        <dbReference type="HAMAP-Rule" id="MF_00129"/>
    </source>
</evidence>
<name>MNMG_ROSS1</name>
<proteinExistence type="inferred from homology"/>
<feature type="chain" id="PRO_0000345327" description="tRNA uridine 5-carboxymethylaminomethyl modification enzyme MnmG">
    <location>
        <begin position="1"/>
        <end position="679"/>
    </location>
</feature>
<feature type="binding site" evidence="1">
    <location>
        <begin position="15"/>
        <end position="20"/>
    </location>
    <ligand>
        <name>FAD</name>
        <dbReference type="ChEBI" id="CHEBI:57692"/>
    </ligand>
</feature>
<feature type="binding site" evidence="1">
    <location>
        <begin position="314"/>
        <end position="328"/>
    </location>
    <ligand>
        <name>NAD(+)</name>
        <dbReference type="ChEBI" id="CHEBI:57540"/>
    </ligand>
</feature>
<gene>
    <name evidence="1" type="primary">mnmG</name>
    <name evidence="1" type="synonym">gidA</name>
    <name type="ordered locus">RoseRS_3168</name>
</gene>
<comment type="function">
    <text evidence="1">NAD-binding protein involved in the addition of a carboxymethylaminomethyl (cmnm) group at the wobble position (U34) of certain tRNAs, forming tRNA-cmnm(5)s(2)U34.</text>
</comment>
<comment type="cofactor">
    <cofactor evidence="1">
        <name>FAD</name>
        <dbReference type="ChEBI" id="CHEBI:57692"/>
    </cofactor>
</comment>
<comment type="subunit">
    <text evidence="1">Homodimer. Heterotetramer of two MnmE and two MnmG subunits.</text>
</comment>
<comment type="subcellular location">
    <subcellularLocation>
        <location evidence="1">Cytoplasm</location>
    </subcellularLocation>
</comment>
<comment type="similarity">
    <text evidence="1">Belongs to the MnmG family.</text>
</comment>